<gene>
    <name type="ORF">B0228.1</name>
</gene>
<reference key="1">
    <citation type="journal article" date="1998" name="Science">
        <title>Genome sequence of the nematode C. elegans: a platform for investigating biology.</title>
        <authorList>
            <consortium name="The C. elegans sequencing consortium"/>
        </authorList>
    </citation>
    <scope>NUCLEOTIDE SEQUENCE [LARGE SCALE GENOMIC DNA]</scope>
    <source>
        <strain>Bristol N2</strain>
    </source>
</reference>
<organism>
    <name type="scientific">Caenorhabditis elegans</name>
    <dbReference type="NCBI Taxonomy" id="6239"/>
    <lineage>
        <taxon>Eukaryota</taxon>
        <taxon>Metazoa</taxon>
        <taxon>Ecdysozoa</taxon>
        <taxon>Nematoda</taxon>
        <taxon>Chromadorea</taxon>
        <taxon>Rhabditida</taxon>
        <taxon>Rhabditina</taxon>
        <taxon>Rhabditomorpha</taxon>
        <taxon>Rhabditoidea</taxon>
        <taxon>Rhabditidae</taxon>
        <taxon>Peloderinae</taxon>
        <taxon>Caenorhabditis</taxon>
    </lineage>
</organism>
<dbReference type="EMBL" id="FO080130">
    <property type="protein sequence ID" value="CCD61454.1"/>
    <property type="molecule type" value="Genomic_DNA"/>
</dbReference>
<dbReference type="PIR" id="T29046">
    <property type="entry name" value="T29046"/>
</dbReference>
<dbReference type="RefSeq" id="NP_495628.2">
    <property type="nucleotide sequence ID" value="NM_063227.5"/>
</dbReference>
<dbReference type="BioGRID" id="46729">
    <property type="interactions" value="3"/>
</dbReference>
<dbReference type="FunCoup" id="Q09220">
    <property type="interactions" value="1483"/>
</dbReference>
<dbReference type="IntAct" id="Q09220">
    <property type="interactions" value="3"/>
</dbReference>
<dbReference type="STRING" id="6239.B0228.1.1"/>
<dbReference type="PaxDb" id="6239-B0228.1"/>
<dbReference type="PeptideAtlas" id="Q09220"/>
<dbReference type="EnsemblMetazoa" id="B0228.1.1">
    <property type="protein sequence ID" value="B0228.1.1"/>
    <property type="gene ID" value="WBGene00015059"/>
</dbReference>
<dbReference type="GeneID" id="181861"/>
<dbReference type="KEGG" id="cel:CELE_B0228.1"/>
<dbReference type="UCSC" id="B0228.1">
    <property type="organism name" value="c. elegans"/>
</dbReference>
<dbReference type="AGR" id="WB:WBGene00015059"/>
<dbReference type="CTD" id="181861"/>
<dbReference type="WormBase" id="B0228.1">
    <property type="protein sequence ID" value="CE41748"/>
    <property type="gene ID" value="WBGene00015059"/>
</dbReference>
<dbReference type="eggNOG" id="ENOG502TG5F">
    <property type="taxonomic scope" value="Eukaryota"/>
</dbReference>
<dbReference type="HOGENOM" id="CLU_1220639_0_0_1"/>
<dbReference type="InParanoid" id="Q09220"/>
<dbReference type="OMA" id="KRMIVYS"/>
<dbReference type="OrthoDB" id="5821182at2759"/>
<dbReference type="PRO" id="PR:Q09220"/>
<dbReference type="Proteomes" id="UP000001940">
    <property type="component" value="Chromosome II"/>
</dbReference>
<dbReference type="Bgee" id="WBGene00015059">
    <property type="expression patterns" value="Expressed in larva and 3 other cell types or tissues"/>
</dbReference>
<protein>
    <recommendedName>
        <fullName>Uncharacterized protein B0228.1</fullName>
    </recommendedName>
</protein>
<keyword id="KW-1185">Reference proteome</keyword>
<keyword id="KW-0732">Signal</keyword>
<proteinExistence type="inferred from homology"/>
<evidence type="ECO:0000255" key="1"/>
<accession>Q09220</accession>
<feature type="signal peptide" evidence="1">
    <location>
        <begin position="1"/>
        <end position="17"/>
    </location>
</feature>
<feature type="chain" id="PRO_0000065045" description="Uncharacterized protein B0228.1">
    <location>
        <begin position="18"/>
        <end position="224"/>
    </location>
</feature>
<sequence length="224" mass="25399">MFTILLYFLVLFWVTNAAVVTPSIENHKMENASVTISKVPISHRPRGFTAGSDSKKLAVQRFKLLISDFLSDAQLSKSIDVAAVGMHKGKSMDDILDDVYTRLRRTLSTKQISELAKAQKGLVEDLDEKSAKLVKARVKRMIVYSFDPAAEQIHKYATRPSMAFALIAETINERFVGSVKDLIRDVLTPKEYDIFRKHYHPHIFKLDNIGNNTEAVRTTTHETF</sequence>
<name>YP71_CAEEL</name>